<organism>
    <name type="scientific">Bacillus mycoides (strain KBAB4)</name>
    <name type="common">Bacillus weihenstephanensis</name>
    <dbReference type="NCBI Taxonomy" id="315730"/>
    <lineage>
        <taxon>Bacteria</taxon>
        <taxon>Bacillati</taxon>
        <taxon>Bacillota</taxon>
        <taxon>Bacilli</taxon>
        <taxon>Bacillales</taxon>
        <taxon>Bacillaceae</taxon>
        <taxon>Bacillus</taxon>
        <taxon>Bacillus cereus group</taxon>
    </lineage>
</organism>
<sequence length="376" mass="42101">MTVSKFVQVRRDLHKIPEIGFKEWKTQQYILDYIGTLPNEYLEVKTWKTGVIVKVNGKNPEKIIGYRADIDGLPITEETGYEYSSVHEGMMHACGHDLHATIGLGLLTAAVSERIDDDLVFIFQPAEEGPGGALPMLESDELKEWKPNMILGLHIAPEYSVGTIATKEGLLFANTSELYVDLKGKGGHAAYPHTANDMIVAASHLVTQLQSVISRNVNPLDSAVITIGKITGGTVQNIIAEKSRLEGTIRTLSVESMKRVKSRIEAIVAGIEASFQCEAVIDYGAMYHQVYNHEELTREFMQFTREQTTMDVITCTEAMTGEDFGYMLREIPGFMFWLGVNSEYGLHHAKLKPDEEVIEKAIVFLNQYVKWKGNRK</sequence>
<gene>
    <name type="ordered locus">BcerKBAB4_3807</name>
</gene>
<proteinExistence type="inferred from homology"/>
<reference key="1">
    <citation type="journal article" date="2008" name="Chem. Biol. Interact.">
        <title>Extending the Bacillus cereus group genomics to putative food-borne pathogens of different toxicity.</title>
        <authorList>
            <person name="Lapidus A."/>
            <person name="Goltsman E."/>
            <person name="Auger S."/>
            <person name="Galleron N."/>
            <person name="Segurens B."/>
            <person name="Dossat C."/>
            <person name="Land M.L."/>
            <person name="Broussolle V."/>
            <person name="Brillard J."/>
            <person name="Guinebretiere M.-H."/>
            <person name="Sanchis V."/>
            <person name="Nguen-the C."/>
            <person name="Lereclus D."/>
            <person name="Richardson P."/>
            <person name="Wincker P."/>
            <person name="Weissenbach J."/>
            <person name="Ehrlich S.D."/>
            <person name="Sorokin A."/>
        </authorList>
    </citation>
    <scope>NUCLEOTIDE SEQUENCE [LARGE SCALE GENOMIC DNA]</scope>
    <source>
        <strain>KBAB4</strain>
    </source>
</reference>
<protein>
    <recommendedName>
        <fullName evidence="1">N-acetyldiaminopimelate deacetylase</fullName>
        <ecNumber evidence="1">3.5.1.47</ecNumber>
    </recommendedName>
</protein>
<evidence type="ECO:0000255" key="1">
    <source>
        <dbReference type="HAMAP-Rule" id="MF_01692"/>
    </source>
</evidence>
<feature type="chain" id="PRO_0000376752" description="N-acetyldiaminopimelate deacetylase">
    <location>
        <begin position="1"/>
        <end position="376"/>
    </location>
</feature>
<feature type="active site" evidence="1">
    <location>
        <position position="69"/>
    </location>
</feature>
<feature type="active site" description="Proton acceptor" evidence="1">
    <location>
        <position position="128"/>
    </location>
</feature>
<comment type="function">
    <text evidence="1">Catalyzes the conversion of N-acetyl-diaminopimelate to diaminopimelate and acetate.</text>
</comment>
<comment type="catalytic activity">
    <reaction evidence="1">
        <text>N-acetyl-(2S,6S)-2,6-diaminopimelate + H2O = (2S,6S)-2,6-diaminopimelate + acetate</text>
        <dbReference type="Rhea" id="RHEA:20405"/>
        <dbReference type="ChEBI" id="CHEBI:15377"/>
        <dbReference type="ChEBI" id="CHEBI:30089"/>
        <dbReference type="ChEBI" id="CHEBI:57609"/>
        <dbReference type="ChEBI" id="CHEBI:58767"/>
        <dbReference type="EC" id="3.5.1.47"/>
    </reaction>
</comment>
<comment type="pathway">
    <text evidence="1">Amino-acid biosynthesis; L-lysine biosynthesis via DAP pathway; LL-2,6-diaminopimelate from (S)-tetrahydrodipicolinate (acetylase route): step 3/3.</text>
</comment>
<comment type="similarity">
    <text evidence="1">Belongs to the peptidase M20A family. N-acetyldiaminopimelate deacetylase subfamily.</text>
</comment>
<keyword id="KW-0028">Amino-acid biosynthesis</keyword>
<keyword id="KW-0220">Diaminopimelate biosynthesis</keyword>
<keyword id="KW-0378">Hydrolase</keyword>
<keyword id="KW-0457">Lysine biosynthesis</keyword>
<accession>A9VUE2</accession>
<name>DAPEL_BACMK</name>
<dbReference type="EC" id="3.5.1.47" evidence="1"/>
<dbReference type="EMBL" id="CP000903">
    <property type="protein sequence ID" value="ABY44976.1"/>
    <property type="molecule type" value="Genomic_DNA"/>
</dbReference>
<dbReference type="RefSeq" id="WP_012261623.1">
    <property type="nucleotide sequence ID" value="NC_010184.1"/>
</dbReference>
<dbReference type="SMR" id="A9VUE2"/>
<dbReference type="MEROPS" id="M20.A27"/>
<dbReference type="KEGG" id="bwe:BcerKBAB4_3807"/>
<dbReference type="eggNOG" id="COG1473">
    <property type="taxonomic scope" value="Bacteria"/>
</dbReference>
<dbReference type="HOGENOM" id="CLU_023257_0_1_9"/>
<dbReference type="UniPathway" id="UPA00034">
    <property type="reaction ID" value="UER00024"/>
</dbReference>
<dbReference type="Proteomes" id="UP000002154">
    <property type="component" value="Chromosome"/>
</dbReference>
<dbReference type="GO" id="GO:0050118">
    <property type="term" value="F:N-acetyldiaminopimelate deacetylase activity"/>
    <property type="evidence" value="ECO:0007669"/>
    <property type="project" value="UniProtKB-UniRule"/>
</dbReference>
<dbReference type="GO" id="GO:0019877">
    <property type="term" value="P:diaminopimelate biosynthetic process"/>
    <property type="evidence" value="ECO:0007669"/>
    <property type="project" value="UniProtKB-UniRule"/>
</dbReference>
<dbReference type="GO" id="GO:0009089">
    <property type="term" value="P:lysine biosynthetic process via diaminopimelate"/>
    <property type="evidence" value="ECO:0007669"/>
    <property type="project" value="UniProtKB-UniRule"/>
</dbReference>
<dbReference type="CDD" id="cd05670">
    <property type="entry name" value="M20_Acy1_YkuR-like"/>
    <property type="match status" value="1"/>
</dbReference>
<dbReference type="FunFam" id="3.30.70.360:FF:000001">
    <property type="entry name" value="N-acetyldiaminopimelate deacetylase"/>
    <property type="match status" value="1"/>
</dbReference>
<dbReference type="Gene3D" id="3.30.70.360">
    <property type="match status" value="1"/>
</dbReference>
<dbReference type="Gene3D" id="3.40.630.10">
    <property type="entry name" value="Zn peptidases"/>
    <property type="match status" value="1"/>
</dbReference>
<dbReference type="HAMAP" id="MF_01692">
    <property type="entry name" value="DapEL"/>
    <property type="match status" value="1"/>
</dbReference>
<dbReference type="InterPro" id="IPR023905">
    <property type="entry name" value="AcetylDAP_deacetylase"/>
</dbReference>
<dbReference type="InterPro" id="IPR017439">
    <property type="entry name" value="Amidohydrolase"/>
</dbReference>
<dbReference type="InterPro" id="IPR036264">
    <property type="entry name" value="Bact_exopeptidase_dim_dom"/>
</dbReference>
<dbReference type="InterPro" id="IPR002933">
    <property type="entry name" value="Peptidase_M20"/>
</dbReference>
<dbReference type="InterPro" id="IPR011650">
    <property type="entry name" value="Peptidase_M20_dimer"/>
</dbReference>
<dbReference type="NCBIfam" id="TIGR01891">
    <property type="entry name" value="amidohydrolases"/>
    <property type="match status" value="1"/>
</dbReference>
<dbReference type="PANTHER" id="PTHR11014:SF98">
    <property type="entry name" value="N-ACETYLDIAMINOPIMELATE DEACETYLASE"/>
    <property type="match status" value="1"/>
</dbReference>
<dbReference type="PANTHER" id="PTHR11014">
    <property type="entry name" value="PEPTIDASE M20 FAMILY MEMBER"/>
    <property type="match status" value="1"/>
</dbReference>
<dbReference type="Pfam" id="PF07687">
    <property type="entry name" value="M20_dimer"/>
    <property type="match status" value="1"/>
</dbReference>
<dbReference type="Pfam" id="PF01546">
    <property type="entry name" value="Peptidase_M20"/>
    <property type="match status" value="1"/>
</dbReference>
<dbReference type="PIRSF" id="PIRSF005962">
    <property type="entry name" value="Pept_M20D_amidohydro"/>
    <property type="match status" value="1"/>
</dbReference>
<dbReference type="SUPFAM" id="SSF55031">
    <property type="entry name" value="Bacterial exopeptidase dimerisation domain"/>
    <property type="match status" value="1"/>
</dbReference>
<dbReference type="SUPFAM" id="SSF53187">
    <property type="entry name" value="Zn-dependent exopeptidases"/>
    <property type="match status" value="1"/>
</dbReference>